<sequence>MTKKEMFYEGKGKKLFKTDDENLLISEFKDDLTAFNAEKRGNESGKGVLNCKISTEIFHLLEKNGIKTHLVETISDTEQVVKKCKIVPIEVIIRNVATGSLIKRLGIKDGTVLPFALVEFCLKDDALGDPFINDEHCLILNLVQNEAQISEIKNMARKINSILTPFFDNKNLRLIDFKIELGLTKDNDLVLADEISPDSCRFWDKFSNEKLDKDRFRQDLGNVKMAYEEVLKRILN</sequence>
<evidence type="ECO:0000255" key="1">
    <source>
        <dbReference type="HAMAP-Rule" id="MF_00137"/>
    </source>
</evidence>
<reference key="1">
    <citation type="submission" date="2007-07" db="EMBL/GenBank/DDBJ databases">
        <title>Complete genome sequence of Campylobacter jejuni subsp doylei 269.97 isolated from human blood.</title>
        <authorList>
            <person name="Fouts D.E."/>
            <person name="Mongodin E.F."/>
            <person name="Puiu D."/>
            <person name="Sebastian Y."/>
            <person name="Miller W.G."/>
            <person name="Mandrell R.E."/>
            <person name="Lastovica A.J."/>
            <person name="Nelson K.E."/>
        </authorList>
    </citation>
    <scope>NUCLEOTIDE SEQUENCE [LARGE SCALE GENOMIC DNA]</scope>
    <source>
        <strain>ATCC BAA-1458 / RM4099 / 269.97</strain>
    </source>
</reference>
<feature type="chain" id="PRO_1000018682" description="Phosphoribosylaminoimidazole-succinocarboxamide synthase">
    <location>
        <begin position="1"/>
        <end position="236"/>
    </location>
</feature>
<name>PUR7_CAMJD</name>
<proteinExistence type="inferred from homology"/>
<protein>
    <recommendedName>
        <fullName evidence="1">Phosphoribosylaminoimidazole-succinocarboxamide synthase</fullName>
        <ecNumber evidence="1">6.3.2.6</ecNumber>
    </recommendedName>
    <alternativeName>
        <fullName evidence="1">SAICAR synthetase</fullName>
    </alternativeName>
</protein>
<keyword id="KW-0067">ATP-binding</keyword>
<keyword id="KW-0436">Ligase</keyword>
<keyword id="KW-0547">Nucleotide-binding</keyword>
<keyword id="KW-0658">Purine biosynthesis</keyword>
<comment type="catalytic activity">
    <reaction evidence="1">
        <text>5-amino-1-(5-phospho-D-ribosyl)imidazole-4-carboxylate + L-aspartate + ATP = (2S)-2-[5-amino-1-(5-phospho-beta-D-ribosyl)imidazole-4-carboxamido]succinate + ADP + phosphate + 2 H(+)</text>
        <dbReference type="Rhea" id="RHEA:22628"/>
        <dbReference type="ChEBI" id="CHEBI:15378"/>
        <dbReference type="ChEBI" id="CHEBI:29991"/>
        <dbReference type="ChEBI" id="CHEBI:30616"/>
        <dbReference type="ChEBI" id="CHEBI:43474"/>
        <dbReference type="ChEBI" id="CHEBI:58443"/>
        <dbReference type="ChEBI" id="CHEBI:77657"/>
        <dbReference type="ChEBI" id="CHEBI:456216"/>
        <dbReference type="EC" id="6.3.2.6"/>
    </reaction>
</comment>
<comment type="pathway">
    <text evidence="1">Purine metabolism; IMP biosynthesis via de novo pathway; 5-amino-1-(5-phospho-D-ribosyl)imidazole-4-carboxamide from 5-amino-1-(5-phospho-D-ribosyl)imidazole-4-carboxylate: step 1/2.</text>
</comment>
<comment type="similarity">
    <text evidence="1">Belongs to the SAICAR synthetase family.</text>
</comment>
<organism>
    <name type="scientific">Campylobacter jejuni subsp. doylei (strain ATCC BAA-1458 / RM4099 / 269.97)</name>
    <dbReference type="NCBI Taxonomy" id="360109"/>
    <lineage>
        <taxon>Bacteria</taxon>
        <taxon>Pseudomonadati</taxon>
        <taxon>Campylobacterota</taxon>
        <taxon>Epsilonproteobacteria</taxon>
        <taxon>Campylobacterales</taxon>
        <taxon>Campylobacteraceae</taxon>
        <taxon>Campylobacter</taxon>
    </lineage>
</organism>
<gene>
    <name evidence="1" type="primary">purC</name>
    <name type="ordered locus">JJD26997_1419</name>
</gene>
<dbReference type="EC" id="6.3.2.6" evidence="1"/>
<dbReference type="EMBL" id="CP000768">
    <property type="protein sequence ID" value="ABS44575.1"/>
    <property type="molecule type" value="Genomic_DNA"/>
</dbReference>
<dbReference type="SMR" id="A7H4M4"/>
<dbReference type="KEGG" id="cjd:JJD26997_1419"/>
<dbReference type="HOGENOM" id="CLU_061495_2_0_7"/>
<dbReference type="UniPathway" id="UPA00074">
    <property type="reaction ID" value="UER00131"/>
</dbReference>
<dbReference type="Proteomes" id="UP000002302">
    <property type="component" value="Chromosome"/>
</dbReference>
<dbReference type="GO" id="GO:0005524">
    <property type="term" value="F:ATP binding"/>
    <property type="evidence" value="ECO:0007669"/>
    <property type="project" value="UniProtKB-KW"/>
</dbReference>
<dbReference type="GO" id="GO:0004639">
    <property type="term" value="F:phosphoribosylaminoimidazolesuccinocarboxamide synthase activity"/>
    <property type="evidence" value="ECO:0007669"/>
    <property type="project" value="UniProtKB-UniRule"/>
</dbReference>
<dbReference type="GO" id="GO:0006189">
    <property type="term" value="P:'de novo' IMP biosynthetic process"/>
    <property type="evidence" value="ECO:0007669"/>
    <property type="project" value="UniProtKB-UniRule"/>
</dbReference>
<dbReference type="GO" id="GO:0009236">
    <property type="term" value="P:cobalamin biosynthetic process"/>
    <property type="evidence" value="ECO:0007669"/>
    <property type="project" value="InterPro"/>
</dbReference>
<dbReference type="CDD" id="cd01415">
    <property type="entry name" value="SAICAR_synt_PurC"/>
    <property type="match status" value="1"/>
</dbReference>
<dbReference type="FunFam" id="3.30.470.20:FF:000006">
    <property type="entry name" value="Phosphoribosylaminoimidazole-succinocarboxamide synthase"/>
    <property type="match status" value="1"/>
</dbReference>
<dbReference type="Gene3D" id="3.30.470.20">
    <property type="entry name" value="ATP-grasp fold, B domain"/>
    <property type="match status" value="1"/>
</dbReference>
<dbReference type="Gene3D" id="3.30.200.20">
    <property type="entry name" value="Phosphorylase Kinase, domain 1"/>
    <property type="match status" value="1"/>
</dbReference>
<dbReference type="HAMAP" id="MF_00137">
    <property type="entry name" value="SAICAR_synth"/>
    <property type="match status" value="1"/>
</dbReference>
<dbReference type="InterPro" id="IPR028923">
    <property type="entry name" value="SAICAR_synt/ADE2_N"/>
</dbReference>
<dbReference type="InterPro" id="IPR033934">
    <property type="entry name" value="SAICAR_synt_PurC"/>
</dbReference>
<dbReference type="InterPro" id="IPR001636">
    <property type="entry name" value="SAICAR_synth"/>
</dbReference>
<dbReference type="InterPro" id="IPR050089">
    <property type="entry name" value="SAICAR_synthetase"/>
</dbReference>
<dbReference type="InterPro" id="IPR018236">
    <property type="entry name" value="SAICAR_synthetase_CS"/>
</dbReference>
<dbReference type="NCBIfam" id="TIGR00081">
    <property type="entry name" value="purC"/>
    <property type="match status" value="1"/>
</dbReference>
<dbReference type="PANTHER" id="PTHR43599">
    <property type="entry name" value="MULTIFUNCTIONAL PROTEIN ADE2"/>
    <property type="match status" value="1"/>
</dbReference>
<dbReference type="PANTHER" id="PTHR43599:SF3">
    <property type="entry name" value="SI:DKEY-6E2.2"/>
    <property type="match status" value="1"/>
</dbReference>
<dbReference type="Pfam" id="PF01259">
    <property type="entry name" value="SAICAR_synt"/>
    <property type="match status" value="1"/>
</dbReference>
<dbReference type="SUPFAM" id="SSF56104">
    <property type="entry name" value="SAICAR synthase-like"/>
    <property type="match status" value="1"/>
</dbReference>
<dbReference type="PROSITE" id="PS01057">
    <property type="entry name" value="SAICAR_SYNTHETASE_1"/>
    <property type="match status" value="1"/>
</dbReference>
<accession>A7H4M4</accession>